<keyword id="KW-0150">Chloroplast</keyword>
<keyword id="KW-0507">mRNA processing</keyword>
<keyword id="KW-0934">Plastid</keyword>
<keyword id="KW-0694">RNA-binding</keyword>
<keyword id="KW-0819">tRNA processing</keyword>
<reference key="1">
    <citation type="submission" date="2005-07" db="EMBL/GenBank/DDBJ databases">
        <title>Environmental energy and species richness in flowering plants.</title>
        <authorList>
            <person name="Davies T.J."/>
        </authorList>
    </citation>
    <scope>NUCLEOTIDE SEQUENCE [GENOMIC DNA]</scope>
</reference>
<evidence type="ECO:0000255" key="1">
    <source>
        <dbReference type="HAMAP-Rule" id="MF_01390"/>
    </source>
</evidence>
<sequence length="522" mass="62920">MEELQGYFEKDRSRQQPFLYPLLFQEYIYALAHDRGLNRNGSIFYEPLEVFGYDSKSSLALVKRLIIRIYQQHFFLSSVNDSNQNRFVGHHHTNFFYSRFYSQMISEGFAIIVEIPFSLQLVSYLKEKEIPKYHNLRSIHSIFPFFEDKLLHFNYVSDILIPHPIHMEILVQILQCWIQDVPLLHFLRFFLHEYTNWNSFFITQNKSIYRFSKETKRLFRFLYNYYVYECEFVFVFIRKHSSYLRFTSFRTFLERRYFYGKMEHLQTEHLIIVCCYYFNGTLWSFKDPFMHYARCQGKAILASKGTHLLMKKWKYNFVNLWQYYFHFWYQSYRIHINQLSNHSFHFLGYLSSLLKNYSTVRNKMLDNSFLIDTLTTQFDTAVPVIFLIGALSKAQFCTVSGHPISKPIWTDLSDSGIIERFGRICRNLSHYHSGSSKKQGLYRIKYILRLSCARTLARKHKSTVRTFLQRLGSGLLEEFFTEREQDLSLILPKAITFPFQGSRRERIWYLDIIRINDLLNRS</sequence>
<gene>
    <name evidence="1" type="primary">matK</name>
</gene>
<dbReference type="EMBL" id="AJ579956">
    <property type="protein sequence ID" value="CAE45230.1"/>
    <property type="molecule type" value="Genomic_DNA"/>
</dbReference>
<dbReference type="GO" id="GO:0009507">
    <property type="term" value="C:chloroplast"/>
    <property type="evidence" value="ECO:0007669"/>
    <property type="project" value="UniProtKB-SubCell"/>
</dbReference>
<dbReference type="GO" id="GO:0003723">
    <property type="term" value="F:RNA binding"/>
    <property type="evidence" value="ECO:0007669"/>
    <property type="project" value="UniProtKB-KW"/>
</dbReference>
<dbReference type="GO" id="GO:0006397">
    <property type="term" value="P:mRNA processing"/>
    <property type="evidence" value="ECO:0007669"/>
    <property type="project" value="UniProtKB-KW"/>
</dbReference>
<dbReference type="GO" id="GO:0008380">
    <property type="term" value="P:RNA splicing"/>
    <property type="evidence" value="ECO:0007669"/>
    <property type="project" value="UniProtKB-UniRule"/>
</dbReference>
<dbReference type="GO" id="GO:0008033">
    <property type="term" value="P:tRNA processing"/>
    <property type="evidence" value="ECO:0007669"/>
    <property type="project" value="UniProtKB-KW"/>
</dbReference>
<dbReference type="HAMAP" id="MF_01390">
    <property type="entry name" value="MatK"/>
    <property type="match status" value="1"/>
</dbReference>
<dbReference type="InterPro" id="IPR024937">
    <property type="entry name" value="Domain_X"/>
</dbReference>
<dbReference type="InterPro" id="IPR002866">
    <property type="entry name" value="Maturase_MatK"/>
</dbReference>
<dbReference type="InterPro" id="IPR024942">
    <property type="entry name" value="Maturase_MatK_N"/>
</dbReference>
<dbReference type="PANTHER" id="PTHR34811">
    <property type="entry name" value="MATURASE K"/>
    <property type="match status" value="1"/>
</dbReference>
<dbReference type="PANTHER" id="PTHR34811:SF1">
    <property type="entry name" value="MATURASE K"/>
    <property type="match status" value="1"/>
</dbReference>
<dbReference type="Pfam" id="PF01348">
    <property type="entry name" value="Intron_maturas2"/>
    <property type="match status" value="1"/>
</dbReference>
<dbReference type="Pfam" id="PF01824">
    <property type="entry name" value="MatK_N"/>
    <property type="match status" value="1"/>
</dbReference>
<name>MATK_GLAPA</name>
<proteinExistence type="inferred from homology"/>
<organism>
    <name type="scientific">Gladiolus papilio</name>
    <name type="common">Goldblotch gladiolus</name>
    <name type="synonym">Gladiolus purpureoauratus</name>
    <dbReference type="NCBI Taxonomy" id="58995"/>
    <lineage>
        <taxon>Eukaryota</taxon>
        <taxon>Viridiplantae</taxon>
        <taxon>Streptophyta</taxon>
        <taxon>Embryophyta</taxon>
        <taxon>Tracheophyta</taxon>
        <taxon>Spermatophyta</taxon>
        <taxon>Magnoliopsida</taxon>
        <taxon>Liliopsida</taxon>
        <taxon>Asparagales</taxon>
        <taxon>Iridaceae</taxon>
        <taxon>Crocoideae</taxon>
        <taxon>Gladioleae</taxon>
        <taxon>Gladiolus</taxon>
    </lineage>
</organism>
<feature type="chain" id="PRO_0000143399" description="Maturase K">
    <location>
        <begin position="1"/>
        <end position="522"/>
    </location>
</feature>
<geneLocation type="chloroplast"/>
<protein>
    <recommendedName>
        <fullName evidence="1">Maturase K</fullName>
    </recommendedName>
    <alternativeName>
        <fullName evidence="1">Intron maturase</fullName>
    </alternativeName>
</protein>
<accession>Q4H1A5</accession>
<comment type="function">
    <text evidence="1">Usually encoded in the trnK tRNA gene intron. Probably assists in splicing its own and other chloroplast group II introns.</text>
</comment>
<comment type="subcellular location">
    <subcellularLocation>
        <location>Plastid</location>
        <location>Chloroplast</location>
    </subcellularLocation>
</comment>
<comment type="similarity">
    <text evidence="1">Belongs to the intron maturase 2 family. MatK subfamily.</text>
</comment>